<feature type="chain" id="PRO_1000011769" description="GTPase Der">
    <location>
        <begin position="1"/>
        <end position="455"/>
    </location>
</feature>
<feature type="domain" description="EngA-type G 1">
    <location>
        <begin position="4"/>
        <end position="169"/>
    </location>
</feature>
<feature type="domain" description="EngA-type G 2">
    <location>
        <begin position="178"/>
        <end position="353"/>
    </location>
</feature>
<feature type="domain" description="KH-like" evidence="1">
    <location>
        <begin position="354"/>
        <end position="439"/>
    </location>
</feature>
<feature type="binding site" evidence="1">
    <location>
        <begin position="10"/>
        <end position="17"/>
    </location>
    <ligand>
        <name>GTP</name>
        <dbReference type="ChEBI" id="CHEBI:37565"/>
        <label>1</label>
    </ligand>
</feature>
<feature type="binding site" evidence="1">
    <location>
        <begin position="57"/>
        <end position="61"/>
    </location>
    <ligand>
        <name>GTP</name>
        <dbReference type="ChEBI" id="CHEBI:37565"/>
        <label>1</label>
    </ligand>
</feature>
<feature type="binding site" evidence="1">
    <location>
        <begin position="120"/>
        <end position="123"/>
    </location>
    <ligand>
        <name>GTP</name>
        <dbReference type="ChEBI" id="CHEBI:37565"/>
        <label>1</label>
    </ligand>
</feature>
<feature type="binding site" evidence="1">
    <location>
        <begin position="184"/>
        <end position="191"/>
    </location>
    <ligand>
        <name>GTP</name>
        <dbReference type="ChEBI" id="CHEBI:37565"/>
        <label>2</label>
    </ligand>
</feature>
<feature type="binding site" evidence="1">
    <location>
        <begin position="231"/>
        <end position="235"/>
    </location>
    <ligand>
        <name>GTP</name>
        <dbReference type="ChEBI" id="CHEBI:37565"/>
        <label>2</label>
    </ligand>
</feature>
<feature type="binding site" evidence="1">
    <location>
        <begin position="296"/>
        <end position="299"/>
    </location>
    <ligand>
        <name>GTP</name>
        <dbReference type="ChEBI" id="CHEBI:37565"/>
        <label>2</label>
    </ligand>
</feature>
<sequence length="455" mass="50671">MARPVVAIIGRPNVGKSTLVNRLCHSREAIVHDEPGVTRDRTYQDGYWGDRDFKVVDTGGLVFDDDSEFLPEIREQAALALEEASVALVIVDGQQGVTASDEAIAEFLRGQRCPALLAVNKCESPEQGLAMAAEFWSLGLGEPYPISAIHGAGTAELLDQVLTYLPPKSEEGDSEEPIQLAIIGRPNVGKSSLLNAICGEQRAIVSPIRGTTRDTIDTSLVRENRPWRLVDTAGIRRRRSVNYGPEFFGINRSFKAIERSDVCVLVIDALDGVTEQDQRLAGRIEEDGRACVVVVNKWDAVEKDSHTMTAMEKELRAKLYFLDWAPMLFTSALTGQRVDSIFALAALAVEQHRRRVSTSVVNEVLKEALSWRSPPTTRGGRQGRLYYGTQVASRPPSFTLFVNDPKLFGDTYRRYVERQIREGLGFDGTPLKLFWRGKQQRDAERDLARQQNRQG</sequence>
<protein>
    <recommendedName>
        <fullName evidence="1">GTPase Der</fullName>
    </recommendedName>
    <alternativeName>
        <fullName evidence="1">GTP-binding protein EngA</fullName>
    </alternativeName>
</protein>
<reference key="1">
    <citation type="submission" date="2006-05" db="EMBL/GenBank/DDBJ databases">
        <authorList>
            <consortium name="Genoscope"/>
        </authorList>
    </citation>
    <scope>NUCLEOTIDE SEQUENCE [LARGE SCALE GENOMIC DNA]</scope>
    <source>
        <strain>WH7803</strain>
    </source>
</reference>
<comment type="function">
    <text evidence="1">GTPase that plays an essential role in the late steps of ribosome biogenesis.</text>
</comment>
<comment type="subunit">
    <text evidence="1">Associates with the 50S ribosomal subunit.</text>
</comment>
<comment type="similarity">
    <text evidence="1">Belongs to the TRAFAC class TrmE-Era-EngA-EngB-Septin-like GTPase superfamily. EngA (Der) GTPase family.</text>
</comment>
<organism>
    <name type="scientific">Synechococcus sp. (strain WH7803)</name>
    <dbReference type="NCBI Taxonomy" id="32051"/>
    <lineage>
        <taxon>Bacteria</taxon>
        <taxon>Bacillati</taxon>
        <taxon>Cyanobacteriota</taxon>
        <taxon>Cyanophyceae</taxon>
        <taxon>Synechococcales</taxon>
        <taxon>Synechococcaceae</taxon>
        <taxon>Synechococcus</taxon>
    </lineage>
</organism>
<keyword id="KW-0342">GTP-binding</keyword>
<keyword id="KW-0547">Nucleotide-binding</keyword>
<keyword id="KW-1185">Reference proteome</keyword>
<keyword id="KW-0677">Repeat</keyword>
<keyword id="KW-0690">Ribosome biogenesis</keyword>
<evidence type="ECO:0000255" key="1">
    <source>
        <dbReference type="HAMAP-Rule" id="MF_00195"/>
    </source>
</evidence>
<name>DER_SYNPW</name>
<dbReference type="EMBL" id="CT971583">
    <property type="protein sequence ID" value="CAK22994.1"/>
    <property type="molecule type" value="Genomic_DNA"/>
</dbReference>
<dbReference type="SMR" id="A5GJ79"/>
<dbReference type="STRING" id="32051.SynWH7803_0568"/>
<dbReference type="KEGG" id="syx:SynWH7803_0568"/>
<dbReference type="eggNOG" id="COG1160">
    <property type="taxonomic scope" value="Bacteria"/>
</dbReference>
<dbReference type="HOGENOM" id="CLU_016077_6_2_3"/>
<dbReference type="OrthoDB" id="9805918at2"/>
<dbReference type="Proteomes" id="UP000001566">
    <property type="component" value="Chromosome"/>
</dbReference>
<dbReference type="GO" id="GO:0016887">
    <property type="term" value="F:ATP hydrolysis activity"/>
    <property type="evidence" value="ECO:0007669"/>
    <property type="project" value="InterPro"/>
</dbReference>
<dbReference type="GO" id="GO:0005525">
    <property type="term" value="F:GTP binding"/>
    <property type="evidence" value="ECO:0007669"/>
    <property type="project" value="UniProtKB-UniRule"/>
</dbReference>
<dbReference type="GO" id="GO:0043022">
    <property type="term" value="F:ribosome binding"/>
    <property type="evidence" value="ECO:0007669"/>
    <property type="project" value="TreeGrafter"/>
</dbReference>
<dbReference type="GO" id="GO:0042254">
    <property type="term" value="P:ribosome biogenesis"/>
    <property type="evidence" value="ECO:0007669"/>
    <property type="project" value="UniProtKB-KW"/>
</dbReference>
<dbReference type="CDD" id="cd01894">
    <property type="entry name" value="EngA1"/>
    <property type="match status" value="1"/>
</dbReference>
<dbReference type="CDD" id="cd01895">
    <property type="entry name" value="EngA2"/>
    <property type="match status" value="1"/>
</dbReference>
<dbReference type="FunFam" id="3.30.300.20:FF:000004">
    <property type="entry name" value="GTPase Der"/>
    <property type="match status" value="1"/>
</dbReference>
<dbReference type="FunFam" id="3.40.50.300:FF:000040">
    <property type="entry name" value="GTPase Der"/>
    <property type="match status" value="1"/>
</dbReference>
<dbReference type="FunFam" id="3.40.50.300:FF:000057">
    <property type="entry name" value="GTPase Der"/>
    <property type="match status" value="1"/>
</dbReference>
<dbReference type="Gene3D" id="3.30.300.20">
    <property type="match status" value="1"/>
</dbReference>
<dbReference type="Gene3D" id="3.40.50.300">
    <property type="entry name" value="P-loop containing nucleotide triphosphate hydrolases"/>
    <property type="match status" value="2"/>
</dbReference>
<dbReference type="HAMAP" id="MF_00195">
    <property type="entry name" value="GTPase_Der"/>
    <property type="match status" value="1"/>
</dbReference>
<dbReference type="InterPro" id="IPR003593">
    <property type="entry name" value="AAA+_ATPase"/>
</dbReference>
<dbReference type="InterPro" id="IPR031166">
    <property type="entry name" value="G_ENGA"/>
</dbReference>
<dbReference type="InterPro" id="IPR006073">
    <property type="entry name" value="GTP-bd"/>
</dbReference>
<dbReference type="InterPro" id="IPR016484">
    <property type="entry name" value="GTPase_Der"/>
</dbReference>
<dbReference type="InterPro" id="IPR032859">
    <property type="entry name" value="KH_dom-like"/>
</dbReference>
<dbReference type="InterPro" id="IPR015946">
    <property type="entry name" value="KH_dom-like_a/b"/>
</dbReference>
<dbReference type="InterPro" id="IPR027417">
    <property type="entry name" value="P-loop_NTPase"/>
</dbReference>
<dbReference type="InterPro" id="IPR005225">
    <property type="entry name" value="Small_GTP-bd"/>
</dbReference>
<dbReference type="NCBIfam" id="TIGR03594">
    <property type="entry name" value="GTPase_EngA"/>
    <property type="match status" value="1"/>
</dbReference>
<dbReference type="NCBIfam" id="TIGR00231">
    <property type="entry name" value="small_GTP"/>
    <property type="match status" value="2"/>
</dbReference>
<dbReference type="PANTHER" id="PTHR43834">
    <property type="entry name" value="GTPASE DER"/>
    <property type="match status" value="1"/>
</dbReference>
<dbReference type="PANTHER" id="PTHR43834:SF6">
    <property type="entry name" value="GTPASE DER"/>
    <property type="match status" value="1"/>
</dbReference>
<dbReference type="Pfam" id="PF14714">
    <property type="entry name" value="KH_dom-like"/>
    <property type="match status" value="1"/>
</dbReference>
<dbReference type="Pfam" id="PF01926">
    <property type="entry name" value="MMR_HSR1"/>
    <property type="match status" value="2"/>
</dbReference>
<dbReference type="PIRSF" id="PIRSF006485">
    <property type="entry name" value="GTP-binding_EngA"/>
    <property type="match status" value="1"/>
</dbReference>
<dbReference type="PRINTS" id="PR00326">
    <property type="entry name" value="GTP1OBG"/>
</dbReference>
<dbReference type="SMART" id="SM00382">
    <property type="entry name" value="AAA"/>
    <property type="match status" value="2"/>
</dbReference>
<dbReference type="SUPFAM" id="SSF52540">
    <property type="entry name" value="P-loop containing nucleoside triphosphate hydrolases"/>
    <property type="match status" value="2"/>
</dbReference>
<dbReference type="PROSITE" id="PS51712">
    <property type="entry name" value="G_ENGA"/>
    <property type="match status" value="2"/>
</dbReference>
<proteinExistence type="inferred from homology"/>
<gene>
    <name evidence="1" type="primary">der</name>
    <name type="synonym">engA</name>
    <name type="ordered locus">SynWH7803_0568</name>
</gene>
<accession>A5GJ79</accession>